<proteinExistence type="inferred from homology"/>
<sequence length="84" mass="9457">MIMAAGSTGERPFFEIITSIRYWIIHAVTLPAIFIAGFLFVYTGLAYDAFGTPRPDSYFQSSESKAPVVTQRYEAKSQLDLRTK</sequence>
<gene>
    <name evidence="1" type="primary">psbE</name>
    <name type="ordered locus">P9215_03221</name>
</gene>
<comment type="function">
    <text evidence="1">This b-type cytochrome is tightly associated with the reaction center of photosystem II (PSII). PSII is a light-driven water:plastoquinone oxidoreductase that uses light energy to abstract electrons from H(2)O, generating O(2) and a proton gradient subsequently used for ATP formation. It consists of a core antenna complex that captures photons, and an electron transfer chain that converts photonic excitation into a charge separation.</text>
</comment>
<comment type="cofactor">
    <cofactor evidence="1">
        <name>heme b</name>
        <dbReference type="ChEBI" id="CHEBI:60344"/>
    </cofactor>
    <text evidence="1">With its partner (PsbF) binds heme. PSII binds additional chlorophylls, carotenoids and specific lipids.</text>
</comment>
<comment type="subunit">
    <text evidence="2">Heterodimer of an alpha subunit and a beta subunit. PSII is composed of 1 copy each of membrane proteins PsbA, PsbB, PsbC, PsbD, PsbE, PsbF, PsbH, PsbI, PsbJ, PsbK, PsbL, PsbM, PsbT, PsbX, PsbY, Psb30/Ycf12, peripheral proteins PsbO, CyanoQ (PsbQ), PsbU, PsbV and a large number of cofactors. It forms dimeric complexes.</text>
</comment>
<comment type="subcellular location">
    <subcellularLocation>
        <location evidence="1">Cellular thylakoid membrane</location>
        <topology evidence="1">Single-pass membrane protein</topology>
    </subcellularLocation>
</comment>
<comment type="similarity">
    <text evidence="1">Belongs to the PsbE/PsbF family.</text>
</comment>
<name>PSBE_PROM2</name>
<accession>A8G2V8</accession>
<reference key="1">
    <citation type="journal article" date="2007" name="PLoS Genet.">
        <title>Patterns and implications of gene gain and loss in the evolution of Prochlorococcus.</title>
        <authorList>
            <person name="Kettler G.C."/>
            <person name="Martiny A.C."/>
            <person name="Huang K."/>
            <person name="Zucker J."/>
            <person name="Coleman M.L."/>
            <person name="Rodrigue S."/>
            <person name="Chen F."/>
            <person name="Lapidus A."/>
            <person name="Ferriera S."/>
            <person name="Johnson J."/>
            <person name="Steglich C."/>
            <person name="Church G.M."/>
            <person name="Richardson P."/>
            <person name="Chisholm S.W."/>
        </authorList>
    </citation>
    <scope>NUCLEOTIDE SEQUENCE [LARGE SCALE GENOMIC DNA]</scope>
    <source>
        <strain>MIT 9215</strain>
    </source>
</reference>
<protein>
    <recommendedName>
        <fullName evidence="1">Cytochrome b559 subunit alpha</fullName>
    </recommendedName>
    <alternativeName>
        <fullName evidence="1">PSII reaction center subunit V</fullName>
    </alternativeName>
</protein>
<keyword id="KW-0249">Electron transport</keyword>
<keyword id="KW-0349">Heme</keyword>
<keyword id="KW-0408">Iron</keyword>
<keyword id="KW-0472">Membrane</keyword>
<keyword id="KW-0479">Metal-binding</keyword>
<keyword id="KW-0602">Photosynthesis</keyword>
<keyword id="KW-0604">Photosystem II</keyword>
<keyword id="KW-0793">Thylakoid</keyword>
<keyword id="KW-0812">Transmembrane</keyword>
<keyword id="KW-1133">Transmembrane helix</keyword>
<keyword id="KW-0813">Transport</keyword>
<evidence type="ECO:0000255" key="1">
    <source>
        <dbReference type="HAMAP-Rule" id="MF_00642"/>
    </source>
</evidence>
<evidence type="ECO:0000305" key="2"/>
<organism>
    <name type="scientific">Prochlorococcus marinus (strain MIT 9215)</name>
    <dbReference type="NCBI Taxonomy" id="93060"/>
    <lineage>
        <taxon>Bacteria</taxon>
        <taxon>Bacillati</taxon>
        <taxon>Cyanobacteriota</taxon>
        <taxon>Cyanophyceae</taxon>
        <taxon>Synechococcales</taxon>
        <taxon>Prochlorococcaceae</taxon>
        <taxon>Prochlorococcus</taxon>
    </lineage>
</organism>
<feature type="chain" id="PRO_1000061454" description="Cytochrome b559 subunit alpha">
    <location>
        <begin position="1"/>
        <end position="84"/>
    </location>
</feature>
<feature type="transmembrane region" description="Helical" evidence="1">
    <location>
        <begin position="24"/>
        <end position="38"/>
    </location>
</feature>
<feature type="binding site" description="axial binding residue" evidence="1">
    <location>
        <position position="26"/>
    </location>
    <ligand>
        <name>heme</name>
        <dbReference type="ChEBI" id="CHEBI:30413"/>
        <note>ligand shared with beta subunit</note>
    </ligand>
    <ligandPart>
        <name>Fe</name>
        <dbReference type="ChEBI" id="CHEBI:18248"/>
    </ligandPart>
</feature>
<dbReference type="EMBL" id="CP000825">
    <property type="protein sequence ID" value="ABV49939.1"/>
    <property type="molecule type" value="Genomic_DNA"/>
</dbReference>
<dbReference type="SMR" id="A8G2V8"/>
<dbReference type="STRING" id="93060.P9215_03221"/>
<dbReference type="KEGG" id="pmh:P9215_03221"/>
<dbReference type="eggNOG" id="ENOG5032RR6">
    <property type="taxonomic scope" value="Bacteria"/>
</dbReference>
<dbReference type="HOGENOM" id="CLU_194095_0_0_3"/>
<dbReference type="Proteomes" id="UP000002014">
    <property type="component" value="Chromosome"/>
</dbReference>
<dbReference type="GO" id="GO:0009523">
    <property type="term" value="C:photosystem II"/>
    <property type="evidence" value="ECO:0007669"/>
    <property type="project" value="UniProtKB-KW"/>
</dbReference>
<dbReference type="GO" id="GO:0031676">
    <property type="term" value="C:plasma membrane-derived thylakoid membrane"/>
    <property type="evidence" value="ECO:0007669"/>
    <property type="project" value="UniProtKB-SubCell"/>
</dbReference>
<dbReference type="GO" id="GO:0009055">
    <property type="term" value="F:electron transfer activity"/>
    <property type="evidence" value="ECO:0007669"/>
    <property type="project" value="UniProtKB-UniRule"/>
</dbReference>
<dbReference type="GO" id="GO:0020037">
    <property type="term" value="F:heme binding"/>
    <property type="evidence" value="ECO:0007669"/>
    <property type="project" value="InterPro"/>
</dbReference>
<dbReference type="GO" id="GO:0005506">
    <property type="term" value="F:iron ion binding"/>
    <property type="evidence" value="ECO:0007669"/>
    <property type="project" value="UniProtKB-UniRule"/>
</dbReference>
<dbReference type="GO" id="GO:0009767">
    <property type="term" value="P:photosynthetic electron transport chain"/>
    <property type="evidence" value="ECO:0007669"/>
    <property type="project" value="InterPro"/>
</dbReference>
<dbReference type="Gene3D" id="1.20.5.860">
    <property type="entry name" value="Photosystem II cytochrome b559, alpha subunit"/>
    <property type="match status" value="1"/>
</dbReference>
<dbReference type="HAMAP" id="MF_00642">
    <property type="entry name" value="PSII_PsbE"/>
    <property type="match status" value="1"/>
</dbReference>
<dbReference type="InterPro" id="IPR006217">
    <property type="entry name" value="PSII_cyt_b559_asu"/>
</dbReference>
<dbReference type="InterPro" id="IPR037025">
    <property type="entry name" value="PSII_cyt_b559_asu_sf"/>
</dbReference>
<dbReference type="InterPro" id="IPR013081">
    <property type="entry name" value="PSII_cyt_b559_N"/>
</dbReference>
<dbReference type="InterPro" id="IPR013082">
    <property type="entry name" value="PSII_cytb559_asu_lum"/>
</dbReference>
<dbReference type="NCBIfam" id="TIGR01332">
    <property type="entry name" value="cyt_b559_alpha"/>
    <property type="match status" value="1"/>
</dbReference>
<dbReference type="PANTHER" id="PTHR33391">
    <property type="entry name" value="CYTOCHROME B559 SUBUNIT BETA-RELATED"/>
    <property type="match status" value="1"/>
</dbReference>
<dbReference type="PANTHER" id="PTHR33391:SF9">
    <property type="entry name" value="CYTOCHROME B559 SUBUNIT BETA-RELATED"/>
    <property type="match status" value="1"/>
</dbReference>
<dbReference type="Pfam" id="PF00283">
    <property type="entry name" value="Cytochrom_B559"/>
    <property type="match status" value="1"/>
</dbReference>
<dbReference type="Pfam" id="PF00284">
    <property type="entry name" value="Cytochrom_B559a"/>
    <property type="match status" value="1"/>
</dbReference>
<dbReference type="PIRSF" id="PIRSF000036">
    <property type="entry name" value="PsbE"/>
    <property type="match status" value="1"/>
</dbReference>
<dbReference type="SUPFAM" id="SSF161045">
    <property type="entry name" value="Cytochrome b559 subunits"/>
    <property type="match status" value="1"/>
</dbReference>